<sequence>MIVIDGSEGEGGGAVVRVSTALAAVTSRSVRVYNIRARRSRSGLSHQHLTAVRAVARISNGTLRGDELGSMELEFSPGRVTGGTFNFDVKTAGSTGLVLQAIMVAAAASEGEIDVTVSGGTDVLWAPTCDYLREVTIPVLEMMGYSARIEIIRRGYYPEGGGRVHAIIEPSELRPITLEESEIHAVRGISHSRNLPVHVAERQAESAMKILRGAGLDVDIMVEDASGPVGRGSGITLWAEGNTRLGAVSLGKPGKRAEKVGSEAARELLGFIESGSPLDRYMGDQIIPYMALTGDSRVRTCELTLHAETNIILSEKITGRRFRVEGERGGPATIEVL</sequence>
<gene>
    <name type="primary">rtcA</name>
    <name type="ordered locus">MTH_1915</name>
</gene>
<protein>
    <recommendedName>
        <fullName>RNA 3'-terminal phosphate cyclase</fullName>
        <shortName>RNA cyclase</shortName>
        <shortName>RNA-3'-phosphate cyclase</shortName>
        <ecNumber>6.5.1.4</ecNumber>
    </recommendedName>
</protein>
<organism>
    <name type="scientific">Methanothermobacter thermautotrophicus (strain ATCC 29096 / DSM 1053 / JCM 10044 / NBRC 100330 / Delta H)</name>
    <name type="common">Methanobacterium thermoautotrophicum</name>
    <dbReference type="NCBI Taxonomy" id="187420"/>
    <lineage>
        <taxon>Archaea</taxon>
        <taxon>Methanobacteriati</taxon>
        <taxon>Methanobacteriota</taxon>
        <taxon>Methanomada group</taxon>
        <taxon>Methanobacteria</taxon>
        <taxon>Methanobacteriales</taxon>
        <taxon>Methanobacteriaceae</taxon>
        <taxon>Methanothermobacter</taxon>
    </lineage>
</organism>
<evidence type="ECO:0000250" key="1"/>
<evidence type="ECO:0000305" key="2"/>
<dbReference type="EC" id="6.5.1.4"/>
<dbReference type="EMBL" id="AE000666">
    <property type="protein sequence ID" value="AAB86375.1"/>
    <property type="molecule type" value="Genomic_DNA"/>
</dbReference>
<dbReference type="PIR" id="G69122">
    <property type="entry name" value="G69122"/>
</dbReference>
<dbReference type="RefSeq" id="WP_010877511.1">
    <property type="nucleotide sequence ID" value="NC_000916.1"/>
</dbReference>
<dbReference type="SMR" id="O27937"/>
<dbReference type="FunCoup" id="O27937">
    <property type="interactions" value="145"/>
</dbReference>
<dbReference type="STRING" id="187420.MTH_1915"/>
<dbReference type="PaxDb" id="187420-MTH_1915"/>
<dbReference type="EnsemblBacteria" id="AAB86375">
    <property type="protein sequence ID" value="AAB86375"/>
    <property type="gene ID" value="MTH_1915"/>
</dbReference>
<dbReference type="GeneID" id="1471000"/>
<dbReference type="KEGG" id="mth:MTH_1915"/>
<dbReference type="PATRIC" id="fig|187420.15.peg.1871"/>
<dbReference type="HOGENOM" id="CLU_027882_0_0_2"/>
<dbReference type="InParanoid" id="O27937"/>
<dbReference type="Proteomes" id="UP000005223">
    <property type="component" value="Chromosome"/>
</dbReference>
<dbReference type="GO" id="GO:0005737">
    <property type="term" value="C:cytoplasm"/>
    <property type="evidence" value="ECO:0007669"/>
    <property type="project" value="UniProtKB-SubCell"/>
</dbReference>
<dbReference type="GO" id="GO:0005524">
    <property type="term" value="F:ATP binding"/>
    <property type="evidence" value="ECO:0007669"/>
    <property type="project" value="UniProtKB-KW"/>
</dbReference>
<dbReference type="GO" id="GO:0003963">
    <property type="term" value="F:RNA-3'-phosphate cyclase activity"/>
    <property type="evidence" value="ECO:0007669"/>
    <property type="project" value="UniProtKB-UniRule"/>
</dbReference>
<dbReference type="GO" id="GO:0006396">
    <property type="term" value="P:RNA processing"/>
    <property type="evidence" value="ECO:0007669"/>
    <property type="project" value="InterPro"/>
</dbReference>
<dbReference type="CDD" id="cd00874">
    <property type="entry name" value="RNA_Cyclase_Class_II"/>
    <property type="match status" value="1"/>
</dbReference>
<dbReference type="FunFam" id="3.30.360.20:FF:000002">
    <property type="entry name" value="RNA terminal phosphate cyclase-like 1"/>
    <property type="match status" value="1"/>
</dbReference>
<dbReference type="Gene3D" id="3.65.10.20">
    <property type="entry name" value="RNA 3'-terminal phosphate cyclase domain"/>
    <property type="match status" value="1"/>
</dbReference>
<dbReference type="Gene3D" id="3.30.360.20">
    <property type="entry name" value="RNA 3'-terminal phosphate cyclase, insert domain"/>
    <property type="match status" value="1"/>
</dbReference>
<dbReference type="HAMAP" id="MF_00200">
    <property type="entry name" value="RTC"/>
    <property type="match status" value="1"/>
</dbReference>
<dbReference type="InterPro" id="IPR013791">
    <property type="entry name" value="RNA3'-term_phos_cycl_insert"/>
</dbReference>
<dbReference type="InterPro" id="IPR023797">
    <property type="entry name" value="RNA3'_phos_cyclase_dom"/>
</dbReference>
<dbReference type="InterPro" id="IPR037136">
    <property type="entry name" value="RNA3'_phos_cyclase_dom_sf"/>
</dbReference>
<dbReference type="InterPro" id="IPR000228">
    <property type="entry name" value="RNA3'_term_phos_cyc"/>
</dbReference>
<dbReference type="InterPro" id="IPR017770">
    <property type="entry name" value="RNA3'_term_phos_cyc_type_1"/>
</dbReference>
<dbReference type="InterPro" id="IPR020719">
    <property type="entry name" value="RNA3'_term_phos_cycl-like_CS"/>
</dbReference>
<dbReference type="InterPro" id="IPR013792">
    <property type="entry name" value="RNA3'P_cycl/enolpyr_Trfase_a/b"/>
</dbReference>
<dbReference type="InterPro" id="IPR036553">
    <property type="entry name" value="RPTC_insert"/>
</dbReference>
<dbReference type="NCBIfam" id="TIGR03399">
    <property type="entry name" value="RNA_3prim_cycl"/>
    <property type="match status" value="1"/>
</dbReference>
<dbReference type="PANTHER" id="PTHR11096">
    <property type="entry name" value="RNA 3' TERMINAL PHOSPHATE CYCLASE"/>
    <property type="match status" value="1"/>
</dbReference>
<dbReference type="PANTHER" id="PTHR11096:SF0">
    <property type="entry name" value="RNA 3'-TERMINAL PHOSPHATE CYCLASE"/>
    <property type="match status" value="1"/>
</dbReference>
<dbReference type="Pfam" id="PF01137">
    <property type="entry name" value="RTC"/>
    <property type="match status" value="1"/>
</dbReference>
<dbReference type="Pfam" id="PF05189">
    <property type="entry name" value="RTC_insert"/>
    <property type="match status" value="1"/>
</dbReference>
<dbReference type="PIRSF" id="PIRSF005378">
    <property type="entry name" value="RNA3'_term_phos_cycl_euk"/>
    <property type="match status" value="1"/>
</dbReference>
<dbReference type="SUPFAM" id="SSF55205">
    <property type="entry name" value="EPT/RTPC-like"/>
    <property type="match status" value="2"/>
</dbReference>
<dbReference type="PROSITE" id="PS01287">
    <property type="entry name" value="RTC"/>
    <property type="match status" value="1"/>
</dbReference>
<proteinExistence type="inferred from homology"/>
<comment type="function">
    <text evidence="1">Catalyzes the conversion of 3'-phosphate to a 2',3'-cyclic phosphodiester at the end of RNA. The mechanism of action of the enzyme occurs in 3 steps: (A) adenylation of the enzyme by ATP; (B) transfer of adenylate to an RNA-N3'P to produce RNA-N3'PP5'A; (C) and attack of the adjacent 2'-hydroxyl on the 3'-phosphorus in the diester linkage to produce the cyclic end product. The biological role of this enzyme is unknown but it is likely to function in some aspects of cellular RNA processing (By similarity).</text>
</comment>
<comment type="catalytic activity">
    <reaction>
        <text>a 3'-end 3'-phospho-ribonucleotide-RNA + ATP = a 3'-end 2',3'-cyclophospho-ribonucleotide-RNA + AMP + diphosphate</text>
        <dbReference type="Rhea" id="RHEA:23976"/>
        <dbReference type="Rhea" id="RHEA-COMP:10463"/>
        <dbReference type="Rhea" id="RHEA-COMP:10464"/>
        <dbReference type="ChEBI" id="CHEBI:30616"/>
        <dbReference type="ChEBI" id="CHEBI:33019"/>
        <dbReference type="ChEBI" id="CHEBI:83062"/>
        <dbReference type="ChEBI" id="CHEBI:83064"/>
        <dbReference type="ChEBI" id="CHEBI:456215"/>
        <dbReference type="EC" id="6.5.1.4"/>
    </reaction>
</comment>
<comment type="subcellular location">
    <subcellularLocation>
        <location evidence="2">Cytoplasm</location>
    </subcellularLocation>
</comment>
<comment type="similarity">
    <text evidence="2">Belongs to the RNA 3'-terminal cyclase family. Type 1 subfamily.</text>
</comment>
<name>RTCA_METTH</name>
<keyword id="KW-0067">ATP-binding</keyword>
<keyword id="KW-0963">Cytoplasm</keyword>
<keyword id="KW-0436">Ligase</keyword>
<keyword id="KW-0547">Nucleotide-binding</keyword>
<keyword id="KW-1185">Reference proteome</keyword>
<accession>O27937</accession>
<reference key="1">
    <citation type="journal article" date="1997" name="J. Bacteriol.">
        <title>Complete genome sequence of Methanobacterium thermoautotrophicum deltaH: functional analysis and comparative genomics.</title>
        <authorList>
            <person name="Smith D.R."/>
            <person name="Doucette-Stamm L.A."/>
            <person name="Deloughery C."/>
            <person name="Lee H.-M."/>
            <person name="Dubois J."/>
            <person name="Aldredge T."/>
            <person name="Bashirzadeh R."/>
            <person name="Blakely D."/>
            <person name="Cook R."/>
            <person name="Gilbert K."/>
            <person name="Harrison D."/>
            <person name="Hoang L."/>
            <person name="Keagle P."/>
            <person name="Lumm W."/>
            <person name="Pothier B."/>
            <person name="Qiu D."/>
            <person name="Spadafora R."/>
            <person name="Vicare R."/>
            <person name="Wang Y."/>
            <person name="Wierzbowski J."/>
            <person name="Gibson R."/>
            <person name="Jiwani N."/>
            <person name="Caruso A."/>
            <person name="Bush D."/>
            <person name="Safer H."/>
            <person name="Patwell D."/>
            <person name="Prabhakar S."/>
            <person name="McDougall S."/>
            <person name="Shimer G."/>
            <person name="Goyal A."/>
            <person name="Pietrovski S."/>
            <person name="Church G.M."/>
            <person name="Daniels C.J."/>
            <person name="Mao J.-I."/>
            <person name="Rice P."/>
            <person name="Noelling J."/>
            <person name="Reeve J.N."/>
        </authorList>
    </citation>
    <scope>NUCLEOTIDE SEQUENCE [LARGE SCALE GENOMIC DNA]</scope>
    <source>
        <strain>ATCC 29096 / DSM 1053 / JCM 10044 / NBRC 100330 / Delta H</strain>
    </source>
</reference>
<feature type="chain" id="PRO_0000156429" description="RNA 3'-terminal phosphate cyclase">
    <location>
        <begin position="1"/>
        <end position="337"/>
    </location>
</feature>
<feature type="active site" description="Tele-AMP-histidine intermediate" evidence="1">
    <location>
        <position position="306"/>
    </location>
</feature>
<feature type="binding site" evidence="1">
    <location>
        <position position="100"/>
    </location>
    <ligand>
        <name>ATP</name>
        <dbReference type="ChEBI" id="CHEBI:30616"/>
    </ligand>
</feature>
<feature type="binding site" evidence="1">
    <location>
        <begin position="281"/>
        <end position="285"/>
    </location>
    <ligand>
        <name>ATP</name>
        <dbReference type="ChEBI" id="CHEBI:30616"/>
    </ligand>
</feature>